<reference key="1">
    <citation type="journal article" date="2008" name="PLoS ONE">
        <title>Genome sequence of the saprophyte Leptospira biflexa provides insights into the evolution of Leptospira and the pathogenesis of leptospirosis.</title>
        <authorList>
            <person name="Picardeau M."/>
            <person name="Bulach D.M."/>
            <person name="Bouchier C."/>
            <person name="Zuerner R.L."/>
            <person name="Zidane N."/>
            <person name="Wilson P.J."/>
            <person name="Creno S."/>
            <person name="Kuczek E.S."/>
            <person name="Bommezzadri S."/>
            <person name="Davis J.C."/>
            <person name="McGrath A."/>
            <person name="Johnson M.J."/>
            <person name="Boursaux-Eude C."/>
            <person name="Seemann T."/>
            <person name="Rouy Z."/>
            <person name="Coppel R.L."/>
            <person name="Rood J.I."/>
            <person name="Lajus A."/>
            <person name="Davies J.K."/>
            <person name="Medigue C."/>
            <person name="Adler B."/>
        </authorList>
    </citation>
    <scope>NUCLEOTIDE SEQUENCE [LARGE SCALE GENOMIC DNA]</scope>
    <source>
        <strain>Patoc 1 / Ames</strain>
    </source>
</reference>
<dbReference type="EMBL" id="CP000777">
    <property type="protein sequence ID" value="ABZ94426.1"/>
    <property type="molecule type" value="Genomic_DNA"/>
</dbReference>
<dbReference type="RefSeq" id="WP_012388947.1">
    <property type="nucleotide sequence ID" value="NC_010842.1"/>
</dbReference>
<dbReference type="SMR" id="B0SAG3"/>
<dbReference type="GeneID" id="93343086"/>
<dbReference type="KEGG" id="lbf:LBF_1922"/>
<dbReference type="HOGENOM" id="CLU_092227_0_0_12"/>
<dbReference type="GO" id="GO:1990904">
    <property type="term" value="C:ribonucleoprotein complex"/>
    <property type="evidence" value="ECO:0007669"/>
    <property type="project" value="UniProtKB-KW"/>
</dbReference>
<dbReference type="GO" id="GO:0005840">
    <property type="term" value="C:ribosome"/>
    <property type="evidence" value="ECO:0007669"/>
    <property type="project" value="UniProtKB-KW"/>
</dbReference>
<dbReference type="GO" id="GO:0070180">
    <property type="term" value="F:large ribosomal subunit rRNA binding"/>
    <property type="evidence" value="ECO:0007669"/>
    <property type="project" value="UniProtKB-UniRule"/>
</dbReference>
<dbReference type="GO" id="GO:0006412">
    <property type="term" value="P:translation"/>
    <property type="evidence" value="ECO:0007669"/>
    <property type="project" value="UniProtKB-UniRule"/>
</dbReference>
<dbReference type="CDD" id="cd05797">
    <property type="entry name" value="Ribosomal_L10"/>
    <property type="match status" value="1"/>
</dbReference>
<dbReference type="Gene3D" id="3.30.70.1730">
    <property type="match status" value="1"/>
</dbReference>
<dbReference type="Gene3D" id="6.10.250.290">
    <property type="match status" value="1"/>
</dbReference>
<dbReference type="HAMAP" id="MF_00362">
    <property type="entry name" value="Ribosomal_uL10"/>
    <property type="match status" value="1"/>
</dbReference>
<dbReference type="InterPro" id="IPR001790">
    <property type="entry name" value="Ribosomal_uL10"/>
</dbReference>
<dbReference type="InterPro" id="IPR043141">
    <property type="entry name" value="Ribosomal_uL10-like_sf"/>
</dbReference>
<dbReference type="InterPro" id="IPR022973">
    <property type="entry name" value="Ribosomal_uL10_bac"/>
</dbReference>
<dbReference type="InterPro" id="IPR047865">
    <property type="entry name" value="Ribosomal_uL10_bac_type"/>
</dbReference>
<dbReference type="NCBIfam" id="NF000955">
    <property type="entry name" value="PRK00099.1-1"/>
    <property type="match status" value="1"/>
</dbReference>
<dbReference type="PANTHER" id="PTHR11560">
    <property type="entry name" value="39S RIBOSOMAL PROTEIN L10, MITOCHONDRIAL"/>
    <property type="match status" value="1"/>
</dbReference>
<dbReference type="Pfam" id="PF00466">
    <property type="entry name" value="Ribosomal_L10"/>
    <property type="match status" value="1"/>
</dbReference>
<dbReference type="SUPFAM" id="SSF160369">
    <property type="entry name" value="Ribosomal protein L10-like"/>
    <property type="match status" value="1"/>
</dbReference>
<feature type="chain" id="PRO_1000120980" description="Large ribosomal subunit protein uL10">
    <location>
        <begin position="1"/>
        <end position="177"/>
    </location>
</feature>
<sequence length="177" mass="19089">MANPSKIEAVTELKTRLEKRPNFILASYSGLTVEDMSNLRAKLRKEGSEMKVIKNNLFLRALKESSEHKNNSIDFGDVYKGPLAAIFSLDALPAVAKVCKDFAKDKKELEIKTGYMDGEVLGKSGVEAIAGLPSKQELLAQVARGINAPATQIASGINQIMASLARAINAVAEKNGN</sequence>
<proteinExistence type="inferred from homology"/>
<evidence type="ECO:0000255" key="1">
    <source>
        <dbReference type="HAMAP-Rule" id="MF_00362"/>
    </source>
</evidence>
<evidence type="ECO:0000305" key="2"/>
<comment type="function">
    <text evidence="1">Forms part of the ribosomal stalk, playing a central role in the interaction of the ribosome with GTP-bound translation factors.</text>
</comment>
<comment type="subunit">
    <text evidence="1">Part of the ribosomal stalk of the 50S ribosomal subunit. The N-terminus interacts with L11 and the large rRNA to form the base of the stalk. The C-terminus forms an elongated spine to which L12 dimers bind in a sequential fashion forming a multimeric L10(L12)X complex.</text>
</comment>
<comment type="similarity">
    <text evidence="1">Belongs to the universal ribosomal protein uL10 family.</text>
</comment>
<organism>
    <name type="scientific">Leptospira biflexa serovar Patoc (strain Patoc 1 / Ames)</name>
    <dbReference type="NCBI Taxonomy" id="355278"/>
    <lineage>
        <taxon>Bacteria</taxon>
        <taxon>Pseudomonadati</taxon>
        <taxon>Spirochaetota</taxon>
        <taxon>Spirochaetia</taxon>
        <taxon>Leptospirales</taxon>
        <taxon>Leptospiraceae</taxon>
        <taxon>Leptospira</taxon>
    </lineage>
</organism>
<protein>
    <recommendedName>
        <fullName evidence="1">Large ribosomal subunit protein uL10</fullName>
    </recommendedName>
    <alternativeName>
        <fullName evidence="2">50S ribosomal protein L10</fullName>
    </alternativeName>
</protein>
<accession>B0SAG3</accession>
<keyword id="KW-0687">Ribonucleoprotein</keyword>
<keyword id="KW-0689">Ribosomal protein</keyword>
<keyword id="KW-0694">RNA-binding</keyword>
<keyword id="KW-0699">rRNA-binding</keyword>
<gene>
    <name evidence="1" type="primary">rplJ</name>
    <name type="ordered locus">LBF_1922</name>
</gene>
<name>RL10_LEPBA</name>